<sequence length="164" mass="18812">MMSALSQAAKSLLLQDFVSAFFLSMRQFFAPKETINYPHEKGPVSPRFRGEHALRRYPNGEERCIACKLCEAICPAQAITIEAGPRRNDGTRRTVRYDIDMVKCIYCGFCQEACPVDAIVEGPNFEFATETREELYYDKDKLLANGDRWERELARNISLDAPYR</sequence>
<protein>
    <recommendedName>
        <fullName evidence="1">NADH-quinone oxidoreductase subunit I</fullName>
        <ecNumber evidence="1">7.1.1.-</ecNumber>
    </recommendedName>
    <alternativeName>
        <fullName evidence="1">NADH dehydrogenase I subunit I</fullName>
    </alternativeName>
    <alternativeName>
        <fullName evidence="1">NDH-1 subunit I</fullName>
    </alternativeName>
</protein>
<reference key="1">
    <citation type="journal article" date="2000" name="DNA Res.">
        <title>Complete genome structure of the nitrogen-fixing symbiotic bacterium Mesorhizobium loti.</title>
        <authorList>
            <person name="Kaneko T."/>
            <person name="Nakamura Y."/>
            <person name="Sato S."/>
            <person name="Asamizu E."/>
            <person name="Kato T."/>
            <person name="Sasamoto S."/>
            <person name="Watanabe A."/>
            <person name="Idesawa K."/>
            <person name="Ishikawa A."/>
            <person name="Kawashima K."/>
            <person name="Kimura T."/>
            <person name="Kishida Y."/>
            <person name="Kiyokawa C."/>
            <person name="Kohara M."/>
            <person name="Matsumoto M."/>
            <person name="Matsuno A."/>
            <person name="Mochizuki Y."/>
            <person name="Nakayama S."/>
            <person name="Nakazaki N."/>
            <person name="Shimpo S."/>
            <person name="Sugimoto M."/>
            <person name="Takeuchi C."/>
            <person name="Yamada M."/>
            <person name="Tabata S."/>
        </authorList>
    </citation>
    <scope>NUCLEOTIDE SEQUENCE [LARGE SCALE GENOMIC DNA]</scope>
    <source>
        <strain>LMG 29417 / CECT 9101 / MAFF 303099</strain>
    </source>
</reference>
<name>NUOI_RHILO</name>
<proteinExistence type="inferred from homology"/>
<keyword id="KW-0004">4Fe-4S</keyword>
<keyword id="KW-0997">Cell inner membrane</keyword>
<keyword id="KW-1003">Cell membrane</keyword>
<keyword id="KW-0408">Iron</keyword>
<keyword id="KW-0411">Iron-sulfur</keyword>
<keyword id="KW-0472">Membrane</keyword>
<keyword id="KW-0479">Metal-binding</keyword>
<keyword id="KW-0520">NAD</keyword>
<keyword id="KW-0874">Quinone</keyword>
<keyword id="KW-0677">Repeat</keyword>
<keyword id="KW-1278">Translocase</keyword>
<keyword id="KW-0830">Ubiquinone</keyword>
<comment type="function">
    <text evidence="1">NDH-1 shuttles electrons from NADH, via FMN and iron-sulfur (Fe-S) centers, to quinones in the respiratory chain. The immediate electron acceptor for the enzyme in this species is believed to be ubiquinone. Couples the redox reaction to proton translocation (for every two electrons transferred, four hydrogen ions are translocated across the cytoplasmic membrane), and thus conserves the redox energy in a proton gradient.</text>
</comment>
<comment type="catalytic activity">
    <reaction evidence="1">
        <text>a quinone + NADH + 5 H(+)(in) = a quinol + NAD(+) + 4 H(+)(out)</text>
        <dbReference type="Rhea" id="RHEA:57888"/>
        <dbReference type="ChEBI" id="CHEBI:15378"/>
        <dbReference type="ChEBI" id="CHEBI:24646"/>
        <dbReference type="ChEBI" id="CHEBI:57540"/>
        <dbReference type="ChEBI" id="CHEBI:57945"/>
        <dbReference type="ChEBI" id="CHEBI:132124"/>
    </reaction>
</comment>
<comment type="cofactor">
    <cofactor evidence="1">
        <name>[4Fe-4S] cluster</name>
        <dbReference type="ChEBI" id="CHEBI:49883"/>
    </cofactor>
    <text evidence="1">Binds 2 [4Fe-4S] clusters per subunit.</text>
</comment>
<comment type="subunit">
    <text evidence="1">NDH-1 is composed of 14 different subunits. Subunits NuoA, H, J, K, L, M, N constitute the membrane sector of the complex.</text>
</comment>
<comment type="subcellular location">
    <subcellularLocation>
        <location evidence="1">Cell inner membrane</location>
        <topology evidence="1">Peripheral membrane protein</topology>
    </subcellularLocation>
</comment>
<comment type="similarity">
    <text evidence="1">Belongs to the complex I 23 kDa subunit family.</text>
</comment>
<accession>Q98KR4</accession>
<gene>
    <name evidence="1" type="primary">nuoI</name>
    <name type="ordered locus">mll1359</name>
</gene>
<dbReference type="EC" id="7.1.1.-" evidence="1"/>
<dbReference type="EMBL" id="BA000012">
    <property type="protein sequence ID" value="BAB48750.1"/>
    <property type="molecule type" value="Genomic_DNA"/>
</dbReference>
<dbReference type="SMR" id="Q98KR4"/>
<dbReference type="KEGG" id="mlo:mll1359"/>
<dbReference type="eggNOG" id="COG1143">
    <property type="taxonomic scope" value="Bacteria"/>
</dbReference>
<dbReference type="HOGENOM" id="CLU_067218_5_1_5"/>
<dbReference type="Proteomes" id="UP000000552">
    <property type="component" value="Chromosome"/>
</dbReference>
<dbReference type="GO" id="GO:0005886">
    <property type="term" value="C:plasma membrane"/>
    <property type="evidence" value="ECO:0007669"/>
    <property type="project" value="UniProtKB-SubCell"/>
</dbReference>
<dbReference type="GO" id="GO:0051539">
    <property type="term" value="F:4 iron, 4 sulfur cluster binding"/>
    <property type="evidence" value="ECO:0007669"/>
    <property type="project" value="UniProtKB-KW"/>
</dbReference>
<dbReference type="GO" id="GO:0005506">
    <property type="term" value="F:iron ion binding"/>
    <property type="evidence" value="ECO:0007669"/>
    <property type="project" value="UniProtKB-UniRule"/>
</dbReference>
<dbReference type="GO" id="GO:0050136">
    <property type="term" value="F:NADH:ubiquinone reductase (non-electrogenic) activity"/>
    <property type="evidence" value="ECO:0007669"/>
    <property type="project" value="UniProtKB-UniRule"/>
</dbReference>
<dbReference type="GO" id="GO:0048038">
    <property type="term" value="F:quinone binding"/>
    <property type="evidence" value="ECO:0007669"/>
    <property type="project" value="UniProtKB-KW"/>
</dbReference>
<dbReference type="GO" id="GO:0009060">
    <property type="term" value="P:aerobic respiration"/>
    <property type="evidence" value="ECO:0007669"/>
    <property type="project" value="TreeGrafter"/>
</dbReference>
<dbReference type="FunFam" id="3.30.70.3270:FF:000001">
    <property type="entry name" value="NADH-quinone oxidoreductase subunit I 1"/>
    <property type="match status" value="1"/>
</dbReference>
<dbReference type="Gene3D" id="3.30.70.3270">
    <property type="match status" value="1"/>
</dbReference>
<dbReference type="HAMAP" id="MF_01351">
    <property type="entry name" value="NDH1_NuoI"/>
    <property type="match status" value="1"/>
</dbReference>
<dbReference type="InterPro" id="IPR017896">
    <property type="entry name" value="4Fe4S_Fe-S-bd"/>
</dbReference>
<dbReference type="InterPro" id="IPR017900">
    <property type="entry name" value="4Fe4S_Fe_S_CS"/>
</dbReference>
<dbReference type="InterPro" id="IPR010226">
    <property type="entry name" value="NADH_quinone_OxRdtase_chainI"/>
</dbReference>
<dbReference type="NCBIfam" id="TIGR01971">
    <property type="entry name" value="NuoI"/>
    <property type="match status" value="1"/>
</dbReference>
<dbReference type="NCBIfam" id="NF004538">
    <property type="entry name" value="PRK05888.1-4"/>
    <property type="match status" value="1"/>
</dbReference>
<dbReference type="NCBIfam" id="NF004539">
    <property type="entry name" value="PRK05888.1-5"/>
    <property type="match status" value="1"/>
</dbReference>
<dbReference type="PANTHER" id="PTHR10849:SF20">
    <property type="entry name" value="NADH DEHYDROGENASE [UBIQUINONE] IRON-SULFUR PROTEIN 8, MITOCHONDRIAL"/>
    <property type="match status" value="1"/>
</dbReference>
<dbReference type="PANTHER" id="PTHR10849">
    <property type="entry name" value="NADH DEHYDROGENASE UBIQUINONE IRON-SULFUR PROTEIN 8, MITOCHONDRIAL"/>
    <property type="match status" value="1"/>
</dbReference>
<dbReference type="Pfam" id="PF12838">
    <property type="entry name" value="Fer4_7"/>
    <property type="match status" value="1"/>
</dbReference>
<dbReference type="SUPFAM" id="SSF54862">
    <property type="entry name" value="4Fe-4S ferredoxins"/>
    <property type="match status" value="1"/>
</dbReference>
<dbReference type="PROSITE" id="PS00198">
    <property type="entry name" value="4FE4S_FER_1"/>
    <property type="match status" value="2"/>
</dbReference>
<dbReference type="PROSITE" id="PS51379">
    <property type="entry name" value="4FE4S_FER_2"/>
    <property type="match status" value="2"/>
</dbReference>
<organism>
    <name type="scientific">Mesorhizobium japonicum (strain LMG 29417 / CECT 9101 / MAFF 303099)</name>
    <name type="common">Mesorhizobium loti (strain MAFF 303099)</name>
    <dbReference type="NCBI Taxonomy" id="266835"/>
    <lineage>
        <taxon>Bacteria</taxon>
        <taxon>Pseudomonadati</taxon>
        <taxon>Pseudomonadota</taxon>
        <taxon>Alphaproteobacteria</taxon>
        <taxon>Hyphomicrobiales</taxon>
        <taxon>Phyllobacteriaceae</taxon>
        <taxon>Mesorhizobium</taxon>
    </lineage>
</organism>
<evidence type="ECO:0000255" key="1">
    <source>
        <dbReference type="HAMAP-Rule" id="MF_01351"/>
    </source>
</evidence>
<feature type="chain" id="PRO_0000250931" description="NADH-quinone oxidoreductase subunit I">
    <location>
        <begin position="1"/>
        <end position="164"/>
    </location>
</feature>
<feature type="domain" description="4Fe-4S ferredoxin-type 1" evidence="1">
    <location>
        <begin position="54"/>
        <end position="84"/>
    </location>
</feature>
<feature type="domain" description="4Fe-4S ferredoxin-type 2" evidence="1">
    <location>
        <begin position="95"/>
        <end position="124"/>
    </location>
</feature>
<feature type="binding site" evidence="1">
    <location>
        <position position="64"/>
    </location>
    <ligand>
        <name>[4Fe-4S] cluster</name>
        <dbReference type="ChEBI" id="CHEBI:49883"/>
        <label>1</label>
    </ligand>
</feature>
<feature type="binding site" evidence="1">
    <location>
        <position position="67"/>
    </location>
    <ligand>
        <name>[4Fe-4S] cluster</name>
        <dbReference type="ChEBI" id="CHEBI:49883"/>
        <label>1</label>
    </ligand>
</feature>
<feature type="binding site" evidence="1">
    <location>
        <position position="70"/>
    </location>
    <ligand>
        <name>[4Fe-4S] cluster</name>
        <dbReference type="ChEBI" id="CHEBI:49883"/>
        <label>1</label>
    </ligand>
</feature>
<feature type="binding site" evidence="1">
    <location>
        <position position="74"/>
    </location>
    <ligand>
        <name>[4Fe-4S] cluster</name>
        <dbReference type="ChEBI" id="CHEBI:49883"/>
        <label>2</label>
    </ligand>
</feature>
<feature type="binding site" evidence="1">
    <location>
        <position position="104"/>
    </location>
    <ligand>
        <name>[4Fe-4S] cluster</name>
        <dbReference type="ChEBI" id="CHEBI:49883"/>
        <label>2</label>
    </ligand>
</feature>
<feature type="binding site" evidence="1">
    <location>
        <position position="107"/>
    </location>
    <ligand>
        <name>[4Fe-4S] cluster</name>
        <dbReference type="ChEBI" id="CHEBI:49883"/>
        <label>2</label>
    </ligand>
</feature>
<feature type="binding site" evidence="1">
    <location>
        <position position="110"/>
    </location>
    <ligand>
        <name>[4Fe-4S] cluster</name>
        <dbReference type="ChEBI" id="CHEBI:49883"/>
        <label>2</label>
    </ligand>
</feature>
<feature type="binding site" evidence="1">
    <location>
        <position position="114"/>
    </location>
    <ligand>
        <name>[4Fe-4S] cluster</name>
        <dbReference type="ChEBI" id="CHEBI:49883"/>
        <label>1</label>
    </ligand>
</feature>